<proteinExistence type="inferred from homology"/>
<protein>
    <recommendedName>
        <fullName>Retinoblastoma-related protein</fullName>
    </recommendedName>
</protein>
<sequence>MSPAALKNMEENKTTVMTTSHSSNDGGETVKGYSDAVEVRFSDFCKSGLALDENTCTQAIKLFKDTKHLLMTNVSSIGNGTSEEAERFWFAFVSYSVKRLSEKNRDDAQQKSDDPGLTLCQILRLAKLNIVDFFKELPHFIVKAGPILSNIYGADWENRLEAKELQANFVHLSILSRHYKRACRELFLTSDASSDKQPAISNEATHVSDHHRFGWLLFLALRVHAFSRFKDLVTCTNGLVSVLAVLIIHVPVRFRNFSFNDSQWFVRKGDKGVDLLASLCNKYDTSEEVLRKSMETTNNLIANILKKKPHSASEYKNENLVNINPDGLIYYEDLMEESSLQSSLNILEKDYDDAIRNKAELDERVFINEEDSLLGSGSVSAGSLNITGAKRKFDLISSPTKTITSPLSPHRSPASHANGIPGSANSKMAATPVSTAMTTAKWLRTIISPLPSKPSAQLERFLVSCDKDVTNDVIRRAQIILEAIFPSSSLGERCVNGSLQSTNLMDNIWAEQRRLEALKLYYRVLESMCTAEAQILHATNLTSLLTNERFHRCMLACSAELVVATYKTVTMLFPAVLERTGITAFDLSKVIESFIRHEESLPRELRRHLNSLEERLLDSMVWEKGSSLYNSLTVARPALSAEINRLGLLAEPMPSLDAIAMHINFSSGCLPPVPSLQKHETSPGSGQNGDLRSPKRPCTDFRSVLVERNSFTSPVKDRLLGNLKSKLPPPPLQSAFASPTRPNPGGGGETCAETGINVFFTKINKLAAVRINGMIEKLQPSQQHIRENVYRLFQLILSHQTSLFFNRHIDQIILCCFYGVAKISKLNLTFREIIYNYRRQPHCKTLVFRSVFVDWSSARHNGRTGQDHVDIITFYNEIFIPAAKPLLVDVGSAGTTVKASNVPEVGNNKDGQCPASPKVSPFPSLPDMSPKKVSSAHNVYVSPLRSSKMDALISNSSKSYYACVGESTHAYQSPSKDLNAINNRLNGNRKARGTLNLDNDVGLVSDSMVANSLGLQNGNCASTSGAALKSEQSDS</sequence>
<dbReference type="EMBL" id="CM009290">
    <property type="protein sequence ID" value="EEE82535.1"/>
    <property type="molecule type" value="Genomic_DNA"/>
</dbReference>
<dbReference type="RefSeq" id="XP_002297730.1">
    <property type="nucleotide sequence ID" value="XM_002297694.1"/>
</dbReference>
<dbReference type="SMR" id="B9GLX8"/>
<dbReference type="FunCoup" id="B9GLX8">
    <property type="interactions" value="3805"/>
</dbReference>
<dbReference type="STRING" id="3694.B9GLX8"/>
<dbReference type="EnsemblPlants" id="Potri.001G031400.1.v4.1">
    <property type="protein sequence ID" value="Potri.001G031400.1.v4.1"/>
    <property type="gene ID" value="Potri.001G031400.v4.1"/>
</dbReference>
<dbReference type="EnsemblPlants" id="Potri.001G031400.2.v4.1">
    <property type="protein sequence ID" value="Potri.001G031400.2.v4.1"/>
    <property type="gene ID" value="Potri.001G031400.v4.1"/>
</dbReference>
<dbReference type="GeneID" id="7455806"/>
<dbReference type="Gramene" id="Potri.001G031400.1.v4.1">
    <property type="protein sequence ID" value="Potri.001G031400.1.v4.1"/>
    <property type="gene ID" value="Potri.001G031400.v4.1"/>
</dbReference>
<dbReference type="Gramene" id="Potri.001G031400.2.v4.1">
    <property type="protein sequence ID" value="Potri.001G031400.2.v4.1"/>
    <property type="gene ID" value="Potri.001G031400.v4.1"/>
</dbReference>
<dbReference type="KEGG" id="pop:7455806"/>
<dbReference type="eggNOG" id="KOG1010">
    <property type="taxonomic scope" value="Eukaryota"/>
</dbReference>
<dbReference type="HOGENOM" id="CLU_015949_0_0_1"/>
<dbReference type="InParanoid" id="B9GLX8"/>
<dbReference type="OMA" id="VYCQSTQ"/>
<dbReference type="OrthoDB" id="844594at2759"/>
<dbReference type="Proteomes" id="UP000006729">
    <property type="component" value="Chromosome 1"/>
</dbReference>
<dbReference type="ExpressionAtlas" id="B9GLX8">
    <property type="expression patterns" value="baseline and differential"/>
</dbReference>
<dbReference type="GO" id="GO:0000785">
    <property type="term" value="C:chromatin"/>
    <property type="evidence" value="ECO:0000318"/>
    <property type="project" value="GO_Central"/>
</dbReference>
<dbReference type="GO" id="GO:0005634">
    <property type="term" value="C:nucleus"/>
    <property type="evidence" value="ECO:0007669"/>
    <property type="project" value="UniProtKB-SubCell"/>
</dbReference>
<dbReference type="GO" id="GO:0005667">
    <property type="term" value="C:transcription regulator complex"/>
    <property type="evidence" value="ECO:0000318"/>
    <property type="project" value="GO_Central"/>
</dbReference>
<dbReference type="GO" id="GO:0000977">
    <property type="term" value="F:RNA polymerase II transcription regulatory region sequence-specific DNA binding"/>
    <property type="evidence" value="ECO:0000318"/>
    <property type="project" value="GO_Central"/>
</dbReference>
<dbReference type="GO" id="GO:0030154">
    <property type="term" value="P:cell differentiation"/>
    <property type="evidence" value="ECO:0000318"/>
    <property type="project" value="GO_Central"/>
</dbReference>
<dbReference type="GO" id="GO:2000134">
    <property type="term" value="P:negative regulation of G1/S transition of mitotic cell cycle"/>
    <property type="evidence" value="ECO:0000318"/>
    <property type="project" value="GO_Central"/>
</dbReference>
<dbReference type="GO" id="GO:0006357">
    <property type="term" value="P:regulation of transcription by RNA polymerase II"/>
    <property type="evidence" value="ECO:0007669"/>
    <property type="project" value="InterPro"/>
</dbReference>
<dbReference type="FunFam" id="1.10.472.10:FF:000030">
    <property type="entry name" value="Retinoblastoma-related protein 1"/>
    <property type="match status" value="1"/>
</dbReference>
<dbReference type="FunFam" id="1.10.472.10:FF:000067">
    <property type="entry name" value="Retinoblastoma-related protein 1"/>
    <property type="match status" value="1"/>
</dbReference>
<dbReference type="FunFam" id="1.10.472.140:FF:000003">
    <property type="entry name" value="Retinoblastoma-related protein 1"/>
    <property type="match status" value="1"/>
</dbReference>
<dbReference type="Gene3D" id="1.10.472.140">
    <property type="match status" value="1"/>
</dbReference>
<dbReference type="Gene3D" id="1.10.472.10">
    <property type="entry name" value="Cyclin-like"/>
    <property type="match status" value="2"/>
</dbReference>
<dbReference type="InterPro" id="IPR036915">
    <property type="entry name" value="Cyclin-like_sf"/>
</dbReference>
<dbReference type="InterPro" id="IPR002720">
    <property type="entry name" value="RB_A"/>
</dbReference>
<dbReference type="InterPro" id="IPR002719">
    <property type="entry name" value="RB_B"/>
</dbReference>
<dbReference type="InterPro" id="IPR028309">
    <property type="entry name" value="RB_fam"/>
</dbReference>
<dbReference type="InterPro" id="IPR024599">
    <property type="entry name" value="RB_N"/>
</dbReference>
<dbReference type="PANTHER" id="PTHR13742:SF17">
    <property type="entry name" value="RE32990P-RELATED"/>
    <property type="match status" value="1"/>
</dbReference>
<dbReference type="PANTHER" id="PTHR13742">
    <property type="entry name" value="RETINOBLASTOMA-ASSOCIATED PROTEIN RB -RELATED"/>
    <property type="match status" value="1"/>
</dbReference>
<dbReference type="Pfam" id="PF11934">
    <property type="entry name" value="DUF3452"/>
    <property type="match status" value="1"/>
</dbReference>
<dbReference type="Pfam" id="PF01858">
    <property type="entry name" value="RB_A"/>
    <property type="match status" value="1"/>
</dbReference>
<dbReference type="Pfam" id="PF01857">
    <property type="entry name" value="RB_B"/>
    <property type="match status" value="1"/>
</dbReference>
<dbReference type="SMART" id="SM01367">
    <property type="entry name" value="DUF3452"/>
    <property type="match status" value="1"/>
</dbReference>
<dbReference type="SMART" id="SM01368">
    <property type="entry name" value="RB_A"/>
    <property type="match status" value="1"/>
</dbReference>
<dbReference type="SUPFAM" id="SSF47954">
    <property type="entry name" value="Cyclin-like"/>
    <property type="match status" value="2"/>
</dbReference>
<name>RBR_POPTR</name>
<accession>B9GLX8</accession>
<evidence type="ECO:0000250" key="1"/>
<evidence type="ECO:0000256" key="2">
    <source>
        <dbReference type="SAM" id="MobiDB-lite"/>
    </source>
</evidence>
<evidence type="ECO:0000305" key="3"/>
<keyword id="KW-0131">Cell cycle</keyword>
<keyword id="KW-0539">Nucleus</keyword>
<keyword id="KW-1185">Reference proteome</keyword>
<keyword id="KW-0678">Repressor</keyword>
<keyword id="KW-0804">Transcription</keyword>
<keyword id="KW-0805">Transcription regulation</keyword>
<comment type="function">
    <text evidence="1">Regulator of biological processes that recruits a histone deacetylase to control gene transcription. May play a role in the entry into mitosis, negatively regulating the cell proliferation. Formation of stable complexes with geminiviridae replication-associated proteins may create a cellular environment which favors viral DNA replication (By similarity).</text>
</comment>
<comment type="subcellular location">
    <subcellularLocation>
        <location evidence="1">Nucleus</location>
    </subcellularLocation>
</comment>
<comment type="similarity">
    <text evidence="3">Belongs to the retinoblastoma protein (RB) family.</text>
</comment>
<organism>
    <name type="scientific">Populus trichocarpa</name>
    <name type="common">Western balsam poplar</name>
    <name type="synonym">Populus balsamifera subsp. trichocarpa</name>
    <dbReference type="NCBI Taxonomy" id="3694"/>
    <lineage>
        <taxon>Eukaryota</taxon>
        <taxon>Viridiplantae</taxon>
        <taxon>Streptophyta</taxon>
        <taxon>Embryophyta</taxon>
        <taxon>Tracheophyta</taxon>
        <taxon>Spermatophyta</taxon>
        <taxon>Magnoliopsida</taxon>
        <taxon>eudicotyledons</taxon>
        <taxon>Gunneridae</taxon>
        <taxon>Pentapetalae</taxon>
        <taxon>rosids</taxon>
        <taxon>fabids</taxon>
        <taxon>Malpighiales</taxon>
        <taxon>Salicaceae</taxon>
        <taxon>Saliceae</taxon>
        <taxon>Populus</taxon>
    </lineage>
</organism>
<reference key="1">
    <citation type="journal article" date="2006" name="Science">
        <title>The genome of black cottonwood, Populus trichocarpa (Torr. &amp; Gray).</title>
        <authorList>
            <person name="Tuskan G.A."/>
            <person name="Difazio S."/>
            <person name="Jansson S."/>
            <person name="Bohlmann J."/>
            <person name="Grigoriev I."/>
            <person name="Hellsten U."/>
            <person name="Putnam N."/>
            <person name="Ralph S."/>
            <person name="Rombauts S."/>
            <person name="Salamov A."/>
            <person name="Schein J."/>
            <person name="Sterck L."/>
            <person name="Aerts A."/>
            <person name="Bhalerao R.R."/>
            <person name="Bhalerao R.P."/>
            <person name="Blaudez D."/>
            <person name="Boerjan W."/>
            <person name="Brun A."/>
            <person name="Brunner A."/>
            <person name="Busov V."/>
            <person name="Campbell M."/>
            <person name="Carlson J."/>
            <person name="Chalot M."/>
            <person name="Chapman J."/>
            <person name="Chen G.-L."/>
            <person name="Cooper D."/>
            <person name="Coutinho P.M."/>
            <person name="Couturier J."/>
            <person name="Covert S."/>
            <person name="Cronk Q."/>
            <person name="Cunningham R."/>
            <person name="Davis J."/>
            <person name="Degroeve S."/>
            <person name="Dejardin A."/>
            <person name="dePamphilis C.W."/>
            <person name="Detter J."/>
            <person name="Dirks B."/>
            <person name="Dubchak I."/>
            <person name="Duplessis S."/>
            <person name="Ehlting J."/>
            <person name="Ellis B."/>
            <person name="Gendler K."/>
            <person name="Goodstein D."/>
            <person name="Gribskov M."/>
            <person name="Grimwood J."/>
            <person name="Groover A."/>
            <person name="Gunter L."/>
            <person name="Hamberger B."/>
            <person name="Heinze B."/>
            <person name="Helariutta Y."/>
            <person name="Henrissat B."/>
            <person name="Holligan D."/>
            <person name="Holt R."/>
            <person name="Huang W."/>
            <person name="Islam-Faridi N."/>
            <person name="Jones S."/>
            <person name="Jones-Rhoades M."/>
            <person name="Jorgensen R."/>
            <person name="Joshi C."/>
            <person name="Kangasjaervi J."/>
            <person name="Karlsson J."/>
            <person name="Kelleher C."/>
            <person name="Kirkpatrick R."/>
            <person name="Kirst M."/>
            <person name="Kohler A."/>
            <person name="Kalluri U."/>
            <person name="Larimer F."/>
            <person name="Leebens-Mack J."/>
            <person name="Leple J.-C."/>
            <person name="Locascio P."/>
            <person name="Lou Y."/>
            <person name="Lucas S."/>
            <person name="Martin F."/>
            <person name="Montanini B."/>
            <person name="Napoli C."/>
            <person name="Nelson D.R."/>
            <person name="Nelson C."/>
            <person name="Nieminen K."/>
            <person name="Nilsson O."/>
            <person name="Pereda V."/>
            <person name="Peter G."/>
            <person name="Philippe R."/>
            <person name="Pilate G."/>
            <person name="Poliakov A."/>
            <person name="Razumovskaya J."/>
            <person name="Richardson P."/>
            <person name="Rinaldi C."/>
            <person name="Ritland K."/>
            <person name="Rouze P."/>
            <person name="Ryaboy D."/>
            <person name="Schmutz J."/>
            <person name="Schrader J."/>
            <person name="Segerman B."/>
            <person name="Shin H."/>
            <person name="Siddiqui A."/>
            <person name="Sterky F."/>
            <person name="Terry A."/>
            <person name="Tsai C.-J."/>
            <person name="Uberbacher E."/>
            <person name="Unneberg P."/>
            <person name="Vahala J."/>
            <person name="Wall K."/>
            <person name="Wessler S."/>
            <person name="Yang G."/>
            <person name="Yin T."/>
            <person name="Douglas C."/>
            <person name="Marra M."/>
            <person name="Sandberg G."/>
            <person name="Van de Peer Y."/>
            <person name="Rokhsar D.S."/>
        </authorList>
    </citation>
    <scope>NUCLEOTIDE SEQUENCE [LARGE SCALE GENOMIC DNA]</scope>
    <source>
        <strain>cv. Nisqually</strain>
    </source>
</reference>
<reference key="2">
    <citation type="submission" date="2008-12" db="EMBL/GenBank/DDBJ databases">
        <authorList>
            <consortium name="US DOE Joint Genome Institute (JGI-PGF)"/>
            <person name="Grigoriev I.V."/>
            <person name="Terry A."/>
            <person name="Salamov A.A."/>
            <person name="Otillar R."/>
            <person name="Lou Y."/>
            <person name="Lucas S."/>
            <person name="Hammon N."/>
            <person name="Glavina del Rio T."/>
            <person name="Detter J."/>
            <person name="Kalin E."/>
            <person name="Tice H."/>
            <person name="Pitluck S."/>
            <person name="Chapman J."/>
            <person name="Putnam N.H."/>
            <person name="Brunner A."/>
            <person name="Busov V."/>
            <person name="Campbell M."/>
            <person name="Chalot M."/>
            <person name="Covert S."/>
            <person name="Davis J."/>
            <person name="DiFazio S."/>
            <person name="Gribskov M."/>
            <person name="Gunter L."/>
            <person name="Hamberger B."/>
            <person name="Jansson S."/>
            <person name="Joshi C."/>
            <person name="Larimer F."/>
            <person name="Martin F."/>
            <person name="Napoli C."/>
            <person name="Nelson D."/>
            <person name="Ralph S."/>
            <person name="Rombauts S."/>
            <person name="Rouze P."/>
            <person name="Schrader J."/>
            <person name="Tsai C."/>
            <person name="Vahala J."/>
            <person name="Tuskan G."/>
            <person name="Rokhsar D."/>
        </authorList>
    </citation>
    <scope>GENOME REANNOTATION</scope>
    <source>
        <strain>cv. Nisqually</strain>
    </source>
</reference>
<gene>
    <name type="primary">RBL901</name>
    <name type="ORF">POPTRDRAFT_547794</name>
</gene>
<feature type="chain" id="PRO_0000380239" description="Retinoblastoma-related protein">
    <location>
        <begin position="1"/>
        <end position="1035"/>
    </location>
</feature>
<feature type="region of interest" description="Disordered" evidence="2">
    <location>
        <begin position="403"/>
        <end position="426"/>
    </location>
</feature>
<feature type="region of interest" description="Pocket" evidence="1">
    <location>
        <begin position="431"/>
        <end position="885"/>
    </location>
</feature>
<feature type="region of interest" description="Domain A" evidence="1">
    <location>
        <begin position="431"/>
        <end position="632"/>
    </location>
</feature>
<feature type="region of interest" description="Spacer" evidence="1">
    <location>
        <begin position="633"/>
        <end position="753"/>
    </location>
</feature>
<feature type="region of interest" description="Disordered" evidence="2">
    <location>
        <begin position="674"/>
        <end position="697"/>
    </location>
</feature>
<feature type="region of interest" description="Disordered" evidence="2">
    <location>
        <begin position="721"/>
        <end position="748"/>
    </location>
</feature>
<feature type="region of interest" description="Domain B" evidence="1">
    <location>
        <begin position="754"/>
        <end position="885"/>
    </location>
</feature>